<name>LNT_RICPR</name>
<accession>Q9ZDG3</accession>
<organism>
    <name type="scientific">Rickettsia prowazekii (strain Madrid E)</name>
    <dbReference type="NCBI Taxonomy" id="272947"/>
    <lineage>
        <taxon>Bacteria</taxon>
        <taxon>Pseudomonadati</taxon>
        <taxon>Pseudomonadota</taxon>
        <taxon>Alphaproteobacteria</taxon>
        <taxon>Rickettsiales</taxon>
        <taxon>Rickettsiaceae</taxon>
        <taxon>Rickettsieae</taxon>
        <taxon>Rickettsia</taxon>
        <taxon>typhus group</taxon>
    </lineage>
</organism>
<gene>
    <name evidence="1" type="primary">lnt</name>
    <name type="ordered locus">RP366</name>
</gene>
<comment type="function">
    <text evidence="1">Catalyzes the phospholipid dependent N-acylation of the N-terminal cysteine of apolipoprotein, the last step in lipoprotein maturation.</text>
</comment>
<comment type="catalytic activity">
    <reaction evidence="1">
        <text>N-terminal S-1,2-diacyl-sn-glyceryl-L-cysteinyl-[lipoprotein] + a glycerophospholipid = N-acyl-S-1,2-diacyl-sn-glyceryl-L-cysteinyl-[lipoprotein] + a 2-acyl-sn-glycero-3-phospholipid + H(+)</text>
        <dbReference type="Rhea" id="RHEA:48228"/>
        <dbReference type="Rhea" id="RHEA-COMP:14681"/>
        <dbReference type="Rhea" id="RHEA-COMP:14684"/>
        <dbReference type="ChEBI" id="CHEBI:15378"/>
        <dbReference type="ChEBI" id="CHEBI:136912"/>
        <dbReference type="ChEBI" id="CHEBI:140656"/>
        <dbReference type="ChEBI" id="CHEBI:140657"/>
        <dbReference type="ChEBI" id="CHEBI:140660"/>
        <dbReference type="EC" id="2.3.1.269"/>
    </reaction>
</comment>
<comment type="pathway">
    <text evidence="1">Protein modification; lipoprotein biosynthesis (N-acyl transfer).</text>
</comment>
<comment type="subcellular location">
    <subcellularLocation>
        <location evidence="1">Cell inner membrane</location>
        <topology evidence="1">Multi-pass membrane protein</topology>
    </subcellularLocation>
</comment>
<comment type="similarity">
    <text evidence="1 2">Belongs to the CN hydrolase family. Apolipoprotein N-acyltransferase subfamily.</text>
</comment>
<feature type="chain" id="PRO_0000178094" description="Apolipoprotein N-acyltransferase">
    <location>
        <begin position="1"/>
        <end position="496"/>
    </location>
</feature>
<feature type="transmembrane region" description="Helical" evidence="1">
    <location>
        <begin position="6"/>
        <end position="26"/>
    </location>
</feature>
<feature type="transmembrane region" description="Helical" evidence="1">
    <location>
        <begin position="50"/>
        <end position="70"/>
    </location>
</feature>
<feature type="transmembrane region" description="Helical" evidence="1">
    <location>
        <begin position="77"/>
        <end position="97"/>
    </location>
</feature>
<feature type="transmembrane region" description="Helical" evidence="1">
    <location>
        <begin position="114"/>
        <end position="134"/>
    </location>
</feature>
<feature type="transmembrane region" description="Helical" evidence="1">
    <location>
        <begin position="148"/>
        <end position="168"/>
    </location>
</feature>
<feature type="transmembrane region" description="Helical" evidence="1">
    <location>
        <begin position="183"/>
        <end position="203"/>
    </location>
</feature>
<feature type="transmembrane region" description="Helical" evidence="1">
    <location>
        <begin position="474"/>
        <end position="494"/>
    </location>
</feature>
<feature type="domain" description="CN hydrolase" evidence="1">
    <location>
        <begin position="220"/>
        <end position="464"/>
    </location>
</feature>
<feature type="active site" description="Proton acceptor" evidence="1">
    <location>
        <position position="259"/>
    </location>
</feature>
<feature type="active site" evidence="1">
    <location>
        <position position="322"/>
    </location>
</feature>
<feature type="active site" description="Nucleophile" evidence="1">
    <location>
        <position position="372"/>
    </location>
</feature>
<dbReference type="EC" id="2.3.1.269" evidence="1"/>
<dbReference type="EMBL" id="AJ235271">
    <property type="protein sequence ID" value="CAA14825.1"/>
    <property type="molecule type" value="Genomic_DNA"/>
</dbReference>
<dbReference type="PIR" id="G71693">
    <property type="entry name" value="G71693"/>
</dbReference>
<dbReference type="RefSeq" id="NP_220749.1">
    <property type="nucleotide sequence ID" value="NC_000963.1"/>
</dbReference>
<dbReference type="RefSeq" id="WP_004599430.1">
    <property type="nucleotide sequence ID" value="NC_000963.1"/>
</dbReference>
<dbReference type="SMR" id="Q9ZDG3"/>
<dbReference type="STRING" id="272947.gene:17555446"/>
<dbReference type="EnsemblBacteria" id="CAA14825">
    <property type="protein sequence ID" value="CAA14825"/>
    <property type="gene ID" value="CAA14825"/>
</dbReference>
<dbReference type="GeneID" id="57569490"/>
<dbReference type="KEGG" id="rpr:RP366"/>
<dbReference type="PATRIC" id="fig|272947.5.peg.376"/>
<dbReference type="eggNOG" id="COG0815">
    <property type="taxonomic scope" value="Bacteria"/>
</dbReference>
<dbReference type="HOGENOM" id="CLU_019563_3_1_5"/>
<dbReference type="OrthoDB" id="9804277at2"/>
<dbReference type="UniPathway" id="UPA00666"/>
<dbReference type="Proteomes" id="UP000002480">
    <property type="component" value="Chromosome"/>
</dbReference>
<dbReference type="GO" id="GO:0005886">
    <property type="term" value="C:plasma membrane"/>
    <property type="evidence" value="ECO:0007669"/>
    <property type="project" value="UniProtKB-SubCell"/>
</dbReference>
<dbReference type="GO" id="GO:0016410">
    <property type="term" value="F:N-acyltransferase activity"/>
    <property type="evidence" value="ECO:0007669"/>
    <property type="project" value="UniProtKB-UniRule"/>
</dbReference>
<dbReference type="GO" id="GO:0042158">
    <property type="term" value="P:lipoprotein biosynthetic process"/>
    <property type="evidence" value="ECO:0007669"/>
    <property type="project" value="UniProtKB-UniRule"/>
</dbReference>
<dbReference type="CDD" id="cd07571">
    <property type="entry name" value="ALP_N-acyl_transferase"/>
    <property type="match status" value="1"/>
</dbReference>
<dbReference type="Gene3D" id="3.60.110.10">
    <property type="entry name" value="Carbon-nitrogen hydrolase"/>
    <property type="match status" value="1"/>
</dbReference>
<dbReference type="HAMAP" id="MF_01148">
    <property type="entry name" value="Lnt"/>
    <property type="match status" value="1"/>
</dbReference>
<dbReference type="InterPro" id="IPR004563">
    <property type="entry name" value="Apolipo_AcylTrfase"/>
</dbReference>
<dbReference type="InterPro" id="IPR003010">
    <property type="entry name" value="C-N_Hydrolase"/>
</dbReference>
<dbReference type="InterPro" id="IPR036526">
    <property type="entry name" value="C-N_Hydrolase_sf"/>
</dbReference>
<dbReference type="InterPro" id="IPR045378">
    <property type="entry name" value="LNT_N"/>
</dbReference>
<dbReference type="NCBIfam" id="TIGR00546">
    <property type="entry name" value="lnt"/>
    <property type="match status" value="1"/>
</dbReference>
<dbReference type="PANTHER" id="PTHR38686">
    <property type="entry name" value="APOLIPOPROTEIN N-ACYLTRANSFERASE"/>
    <property type="match status" value="1"/>
</dbReference>
<dbReference type="PANTHER" id="PTHR38686:SF1">
    <property type="entry name" value="APOLIPOPROTEIN N-ACYLTRANSFERASE"/>
    <property type="match status" value="1"/>
</dbReference>
<dbReference type="Pfam" id="PF00795">
    <property type="entry name" value="CN_hydrolase"/>
    <property type="match status" value="1"/>
</dbReference>
<dbReference type="Pfam" id="PF20154">
    <property type="entry name" value="LNT_N"/>
    <property type="match status" value="1"/>
</dbReference>
<dbReference type="SUPFAM" id="SSF56317">
    <property type="entry name" value="Carbon-nitrogen hydrolase"/>
    <property type="match status" value="1"/>
</dbReference>
<dbReference type="PROSITE" id="PS50263">
    <property type="entry name" value="CN_HYDROLASE"/>
    <property type="match status" value="1"/>
</dbReference>
<sequence>MYKTKIICLLLGILSGLVFAPIFFIPALFTFSYLCYIVQKSQNWQVAAKFGYLFGFGHFLSGMYWISIGVSVYIADFWWAIPFALFGLPIILAFFISANCTLSFFAKNNKYYQLIFCLLWVLFEWIRSWILTGLPWNLIGYAFSFSEILIQPLSITGIYGLSFIVIYISTSAYPVFTKKFTQLKILLASSMLILTVMVIYGAVRVSTNPTNFTDIKVRLVQPSIPQTAKWDQEEFWHNLMLHINLSENLEPTDLIIWSEAALVVPDDIPQVKLKLLNMLNSTNAILITGGISDNKKHGDQFELYSAMYALDKNNNKLFEYHKSHLVPFGEYMPLKNILPFKKLTHGLIDYKEGDGGLVYIKKYHLKIKPLICYESIFPNFVRTNNEIVDVIINITNDAWYGKSSGPYQHFHISRSRAVENGLPMIRVANNGISAIVDPIGRIVKKLNLNEINYIQGLIPQKLTTPTIFSQFGNFAMLLSIVFIILIHYLLSLIFDE</sequence>
<protein>
    <recommendedName>
        <fullName evidence="1">Apolipoprotein N-acyltransferase</fullName>
        <shortName evidence="1">ALP N-acyltransferase</shortName>
        <ecNumber evidence="1">2.3.1.269</ecNumber>
    </recommendedName>
</protein>
<keyword id="KW-0012">Acyltransferase</keyword>
<keyword id="KW-0997">Cell inner membrane</keyword>
<keyword id="KW-1003">Cell membrane</keyword>
<keyword id="KW-0472">Membrane</keyword>
<keyword id="KW-1185">Reference proteome</keyword>
<keyword id="KW-0808">Transferase</keyword>
<keyword id="KW-0812">Transmembrane</keyword>
<keyword id="KW-1133">Transmembrane helix</keyword>
<evidence type="ECO:0000255" key="1">
    <source>
        <dbReference type="HAMAP-Rule" id="MF_01148"/>
    </source>
</evidence>
<evidence type="ECO:0000305" key="2"/>
<reference key="1">
    <citation type="journal article" date="1998" name="Nature">
        <title>The genome sequence of Rickettsia prowazekii and the origin of mitochondria.</title>
        <authorList>
            <person name="Andersson S.G.E."/>
            <person name="Zomorodipour A."/>
            <person name="Andersson J.O."/>
            <person name="Sicheritz-Ponten T."/>
            <person name="Alsmark U.C.M."/>
            <person name="Podowski R.M."/>
            <person name="Naeslund A.K."/>
            <person name="Eriksson A.-S."/>
            <person name="Winkler H.H."/>
            <person name="Kurland C.G."/>
        </authorList>
    </citation>
    <scope>NUCLEOTIDE SEQUENCE [LARGE SCALE GENOMIC DNA]</scope>
    <source>
        <strain>Madrid E</strain>
    </source>
</reference>
<proteinExistence type="inferred from homology"/>